<name>LEU3_MOOTA</name>
<feature type="chain" id="PRO_0000250121" description="3-isopropylmalate dehydrogenase">
    <location>
        <begin position="1"/>
        <end position="357"/>
    </location>
</feature>
<feature type="binding site" evidence="1">
    <location>
        <begin position="75"/>
        <end position="88"/>
    </location>
    <ligand>
        <name>NAD(+)</name>
        <dbReference type="ChEBI" id="CHEBI:57540"/>
    </ligand>
</feature>
<feature type="binding site" evidence="1">
    <location>
        <position position="96"/>
    </location>
    <ligand>
        <name>substrate</name>
    </ligand>
</feature>
<feature type="binding site" evidence="1">
    <location>
        <position position="106"/>
    </location>
    <ligand>
        <name>substrate</name>
    </ligand>
</feature>
<feature type="binding site" evidence="1">
    <location>
        <position position="134"/>
    </location>
    <ligand>
        <name>substrate</name>
    </ligand>
</feature>
<feature type="binding site" evidence="1">
    <location>
        <position position="222"/>
    </location>
    <ligand>
        <name>Mg(2+)</name>
        <dbReference type="ChEBI" id="CHEBI:18420"/>
    </ligand>
</feature>
<feature type="binding site" evidence="1">
    <location>
        <position position="222"/>
    </location>
    <ligand>
        <name>substrate</name>
    </ligand>
</feature>
<feature type="binding site" evidence="1">
    <location>
        <position position="246"/>
    </location>
    <ligand>
        <name>Mg(2+)</name>
        <dbReference type="ChEBI" id="CHEBI:18420"/>
    </ligand>
</feature>
<feature type="binding site" evidence="1">
    <location>
        <position position="250"/>
    </location>
    <ligand>
        <name>Mg(2+)</name>
        <dbReference type="ChEBI" id="CHEBI:18420"/>
    </ligand>
</feature>
<feature type="binding site" evidence="1">
    <location>
        <begin position="279"/>
        <end position="291"/>
    </location>
    <ligand>
        <name>NAD(+)</name>
        <dbReference type="ChEBI" id="CHEBI:57540"/>
    </ligand>
</feature>
<feature type="site" description="Important for catalysis" evidence="1">
    <location>
        <position position="141"/>
    </location>
</feature>
<feature type="site" description="Important for catalysis" evidence="1">
    <location>
        <position position="190"/>
    </location>
</feature>
<keyword id="KW-0028">Amino-acid biosynthesis</keyword>
<keyword id="KW-0100">Branched-chain amino acid biosynthesis</keyword>
<keyword id="KW-0963">Cytoplasm</keyword>
<keyword id="KW-0432">Leucine biosynthesis</keyword>
<keyword id="KW-0460">Magnesium</keyword>
<keyword id="KW-0464">Manganese</keyword>
<keyword id="KW-0479">Metal-binding</keyword>
<keyword id="KW-0520">NAD</keyword>
<keyword id="KW-0560">Oxidoreductase</keyword>
<evidence type="ECO:0000255" key="1">
    <source>
        <dbReference type="HAMAP-Rule" id="MF_01033"/>
    </source>
</evidence>
<reference key="1">
    <citation type="journal article" date="2008" name="Environ. Microbiol.">
        <title>The complete genome sequence of Moorella thermoacetica (f. Clostridium thermoaceticum).</title>
        <authorList>
            <person name="Pierce E."/>
            <person name="Xie G."/>
            <person name="Barabote R.D."/>
            <person name="Saunders E."/>
            <person name="Han C.S."/>
            <person name="Detter J.C."/>
            <person name="Richardson P."/>
            <person name="Brettin T.S."/>
            <person name="Das A."/>
            <person name="Ljungdahl L.G."/>
            <person name="Ragsdale S.W."/>
        </authorList>
    </citation>
    <scope>NUCLEOTIDE SEQUENCE [LARGE SCALE GENOMIC DNA]</scope>
    <source>
        <strain>ATCC 39073 / JCM 9320</strain>
    </source>
</reference>
<comment type="function">
    <text evidence="1">Catalyzes the oxidation of 3-carboxy-2-hydroxy-4-methylpentanoate (3-isopropylmalate) to 3-carboxy-4-methyl-2-oxopentanoate. The product decarboxylates to 4-methyl-2 oxopentanoate.</text>
</comment>
<comment type="catalytic activity">
    <reaction evidence="1">
        <text>(2R,3S)-3-isopropylmalate + NAD(+) = 4-methyl-2-oxopentanoate + CO2 + NADH</text>
        <dbReference type="Rhea" id="RHEA:32271"/>
        <dbReference type="ChEBI" id="CHEBI:16526"/>
        <dbReference type="ChEBI" id="CHEBI:17865"/>
        <dbReference type="ChEBI" id="CHEBI:35121"/>
        <dbReference type="ChEBI" id="CHEBI:57540"/>
        <dbReference type="ChEBI" id="CHEBI:57945"/>
        <dbReference type="EC" id="1.1.1.85"/>
    </reaction>
</comment>
<comment type="cofactor">
    <cofactor evidence="1">
        <name>Mg(2+)</name>
        <dbReference type="ChEBI" id="CHEBI:18420"/>
    </cofactor>
    <cofactor evidence="1">
        <name>Mn(2+)</name>
        <dbReference type="ChEBI" id="CHEBI:29035"/>
    </cofactor>
    <text evidence="1">Binds 1 Mg(2+) or Mn(2+) ion per subunit.</text>
</comment>
<comment type="pathway">
    <text evidence="1">Amino-acid biosynthesis; L-leucine biosynthesis; L-leucine from 3-methyl-2-oxobutanoate: step 3/4.</text>
</comment>
<comment type="subunit">
    <text evidence="1">Homodimer.</text>
</comment>
<comment type="subcellular location">
    <subcellularLocation>
        <location evidence="1">Cytoplasm</location>
    </subcellularLocation>
</comment>
<comment type="similarity">
    <text evidence="1">Belongs to the isocitrate and isopropylmalate dehydrogenases family. LeuB type 1 subfamily.</text>
</comment>
<gene>
    <name evidence="1" type="primary">leuB</name>
    <name type="ordered locus">Moth_2252</name>
</gene>
<protein>
    <recommendedName>
        <fullName evidence="1">3-isopropylmalate dehydrogenase</fullName>
        <ecNumber evidence="1">1.1.1.85</ecNumber>
    </recommendedName>
    <alternativeName>
        <fullName evidence="1">3-IPM-DH</fullName>
    </alternativeName>
    <alternativeName>
        <fullName evidence="1">Beta-IPM dehydrogenase</fullName>
        <shortName evidence="1">IMDH</shortName>
    </alternativeName>
</protein>
<proteinExistence type="inferred from homology"/>
<dbReference type="EC" id="1.1.1.85" evidence="1"/>
<dbReference type="EMBL" id="CP000232">
    <property type="protein sequence ID" value="ABC20539.1"/>
    <property type="molecule type" value="Genomic_DNA"/>
</dbReference>
<dbReference type="RefSeq" id="YP_431082.1">
    <property type="nucleotide sequence ID" value="NC_007644.1"/>
</dbReference>
<dbReference type="SMR" id="Q2RGA0"/>
<dbReference type="STRING" id="264732.Moth_2252"/>
<dbReference type="EnsemblBacteria" id="ABC20539">
    <property type="protein sequence ID" value="ABC20539"/>
    <property type="gene ID" value="Moth_2252"/>
</dbReference>
<dbReference type="KEGG" id="mta:Moth_2252"/>
<dbReference type="PATRIC" id="fig|264732.11.peg.2451"/>
<dbReference type="eggNOG" id="COG0473">
    <property type="taxonomic scope" value="Bacteria"/>
</dbReference>
<dbReference type="HOGENOM" id="CLU_031953_0_3_9"/>
<dbReference type="OrthoDB" id="9806254at2"/>
<dbReference type="UniPathway" id="UPA00048">
    <property type="reaction ID" value="UER00072"/>
</dbReference>
<dbReference type="GO" id="GO:0005829">
    <property type="term" value="C:cytosol"/>
    <property type="evidence" value="ECO:0007669"/>
    <property type="project" value="TreeGrafter"/>
</dbReference>
<dbReference type="GO" id="GO:0003862">
    <property type="term" value="F:3-isopropylmalate dehydrogenase activity"/>
    <property type="evidence" value="ECO:0007669"/>
    <property type="project" value="UniProtKB-UniRule"/>
</dbReference>
<dbReference type="GO" id="GO:0000287">
    <property type="term" value="F:magnesium ion binding"/>
    <property type="evidence" value="ECO:0007669"/>
    <property type="project" value="InterPro"/>
</dbReference>
<dbReference type="GO" id="GO:0051287">
    <property type="term" value="F:NAD binding"/>
    <property type="evidence" value="ECO:0007669"/>
    <property type="project" value="InterPro"/>
</dbReference>
<dbReference type="GO" id="GO:0009098">
    <property type="term" value="P:L-leucine biosynthetic process"/>
    <property type="evidence" value="ECO:0007669"/>
    <property type="project" value="UniProtKB-UniRule"/>
</dbReference>
<dbReference type="FunFam" id="3.40.718.10:FF:000028">
    <property type="entry name" value="3-isopropylmalate dehydrogenase"/>
    <property type="match status" value="1"/>
</dbReference>
<dbReference type="Gene3D" id="3.40.718.10">
    <property type="entry name" value="Isopropylmalate Dehydrogenase"/>
    <property type="match status" value="1"/>
</dbReference>
<dbReference type="HAMAP" id="MF_01033">
    <property type="entry name" value="LeuB_type1"/>
    <property type="match status" value="1"/>
</dbReference>
<dbReference type="InterPro" id="IPR019818">
    <property type="entry name" value="IsoCit/isopropylmalate_DH_CS"/>
</dbReference>
<dbReference type="InterPro" id="IPR024084">
    <property type="entry name" value="IsoPropMal-DH-like_dom"/>
</dbReference>
<dbReference type="InterPro" id="IPR004429">
    <property type="entry name" value="Isopropylmalate_DH"/>
</dbReference>
<dbReference type="NCBIfam" id="TIGR00169">
    <property type="entry name" value="leuB"/>
    <property type="match status" value="1"/>
</dbReference>
<dbReference type="PANTHER" id="PTHR42979">
    <property type="entry name" value="3-ISOPROPYLMALATE DEHYDROGENASE"/>
    <property type="match status" value="1"/>
</dbReference>
<dbReference type="PANTHER" id="PTHR42979:SF1">
    <property type="entry name" value="3-ISOPROPYLMALATE DEHYDROGENASE"/>
    <property type="match status" value="1"/>
</dbReference>
<dbReference type="Pfam" id="PF00180">
    <property type="entry name" value="Iso_dh"/>
    <property type="match status" value="1"/>
</dbReference>
<dbReference type="SMART" id="SM01329">
    <property type="entry name" value="Iso_dh"/>
    <property type="match status" value="1"/>
</dbReference>
<dbReference type="SUPFAM" id="SSF53659">
    <property type="entry name" value="Isocitrate/Isopropylmalate dehydrogenase-like"/>
    <property type="match status" value="1"/>
</dbReference>
<dbReference type="PROSITE" id="PS00470">
    <property type="entry name" value="IDH_IMDH"/>
    <property type="match status" value="1"/>
</dbReference>
<organism>
    <name type="scientific">Moorella thermoacetica (strain ATCC 39073 / JCM 9320)</name>
    <dbReference type="NCBI Taxonomy" id="264732"/>
    <lineage>
        <taxon>Bacteria</taxon>
        <taxon>Bacillati</taxon>
        <taxon>Bacillota</taxon>
        <taxon>Clostridia</taxon>
        <taxon>Moorellales</taxon>
        <taxon>Moorellaceae</taxon>
        <taxon>Moorella</taxon>
    </lineage>
</organism>
<accession>Q2RGA0</accession>
<sequence>MYKIAVLPGDGIGPEIVPEAVKVLEAVSRRVGIEFQFTEALVGGAAIDARGIALPPETLELCRQSDAVLLGAVGGPKWDTLPPAERPETAALLPLRKELGLYANLRPAFLYDSLVEASPLKKEIVTGTDLIIVRELTGGLYFGAKKREQTAEGEMAYDTMYYTRAEIERIVRLAFTIARQRRCHLTSVDKANVLTTSRLWRDTVEDIKGEFPEVTVEHMYVDNCAMQLVRRPAQFDVIVTENTFGDILSDQASVLTGSIGMLPSASIGGAVALYEPCHGSAPDIAGQQKANPLATILSAAMMLKYSFKMDQAAAAIEAAVGRVLAKGYRTPDLYVPGTQLVGTAEMGQLVRRELEEG</sequence>